<comment type="function">
    <text evidence="1">Plasma membrane osmosensor that activates the high osmolarity glycerol (HOG) MAPK signaling pathway in response to high osmolarity.</text>
</comment>
<comment type="subunit">
    <text evidence="1">Forms homooligomers.</text>
</comment>
<comment type="subcellular location">
    <subcellularLocation>
        <location evidence="1">Cell membrane</location>
        <topology evidence="1">Multi-pass membrane protein</topology>
    </subcellularLocation>
</comment>
<comment type="similarity">
    <text evidence="5">Belongs to the SHO1 family.</text>
</comment>
<proteinExistence type="inferred from homology"/>
<sequence length="309" mass="32905">MAQLDVNNIMGDPFALVTLSMAMIGWLLSLVTCVISDVQGIFPNYVWWAVTYMFVTIIGLAIVMGSQTSHVYAIAIVGYLAAGLCFTTLAVNSLVYDGSATKQAAAAGFILQSMVIIIWIFYFGSTPRSSTRGYLDHSGGAGNEHHSYRNSKPISNSYGRPETTVSGNQPPQMYTSAQLNGFETSTPIAGYPSTATDNPNNAGRFGQAPIGSQTNLTPGNNPVVGAGGISLGMGGATDPSNANEISQPTEYPYRAKAIYSYEANPDDANEISFAKHEILDVSDVSGRWWQAKKATGETGIAPSNYLILL</sequence>
<evidence type="ECO:0000250" key="1"/>
<evidence type="ECO:0000255" key="2"/>
<evidence type="ECO:0000255" key="3">
    <source>
        <dbReference type="PROSITE-ProRule" id="PRU00192"/>
    </source>
</evidence>
<evidence type="ECO:0000256" key="4">
    <source>
        <dbReference type="SAM" id="MobiDB-lite"/>
    </source>
</evidence>
<evidence type="ECO:0000305" key="5"/>
<feature type="chain" id="PRO_0000410388" description="High osmolarity signaling protein SHO1">
    <location>
        <begin position="1"/>
        <end position="309"/>
    </location>
</feature>
<feature type="topological domain" description="Cytoplasmic" evidence="2">
    <location>
        <begin position="1"/>
        <end position="14"/>
    </location>
</feature>
<feature type="transmembrane region" description="Helical" evidence="2">
    <location>
        <begin position="15"/>
        <end position="35"/>
    </location>
</feature>
<feature type="topological domain" description="Extracellular" evidence="2">
    <location>
        <begin position="36"/>
        <end position="44"/>
    </location>
</feature>
<feature type="transmembrane region" description="Helical" evidence="2">
    <location>
        <begin position="45"/>
        <end position="65"/>
    </location>
</feature>
<feature type="topological domain" description="Cytoplasmic" evidence="2">
    <location>
        <begin position="66"/>
        <end position="70"/>
    </location>
</feature>
<feature type="transmembrane region" description="Helical" evidence="2">
    <location>
        <begin position="71"/>
        <end position="91"/>
    </location>
</feature>
<feature type="topological domain" description="Extracellular" evidence="2">
    <location>
        <begin position="92"/>
        <end position="103"/>
    </location>
</feature>
<feature type="transmembrane region" description="Helical" evidence="2">
    <location>
        <begin position="104"/>
        <end position="124"/>
    </location>
</feature>
<feature type="topological domain" description="Cytoplasmic" evidence="2">
    <location>
        <begin position="125"/>
        <end position="309"/>
    </location>
</feature>
<feature type="domain" description="SH3" evidence="3">
    <location>
        <begin position="250"/>
        <end position="309"/>
    </location>
</feature>
<feature type="region of interest" description="Disordered" evidence="4">
    <location>
        <begin position="134"/>
        <end position="175"/>
    </location>
</feature>
<feature type="compositionally biased region" description="Polar residues" evidence="4">
    <location>
        <begin position="150"/>
        <end position="175"/>
    </location>
</feature>
<reference key="1">
    <citation type="journal article" date="2011" name="PLoS Genet.">
        <title>Comparative genomic analysis of human fungal pathogens causing paracoccidioidomycosis.</title>
        <authorList>
            <person name="Desjardins C.A."/>
            <person name="Champion M.D."/>
            <person name="Holder J.W."/>
            <person name="Muszewska A."/>
            <person name="Goldberg J."/>
            <person name="Bailao A.M."/>
            <person name="Brigido M.M."/>
            <person name="Ferreira M.E."/>
            <person name="Garcia A.M."/>
            <person name="Grynberg M."/>
            <person name="Gujja S."/>
            <person name="Heiman D.I."/>
            <person name="Henn M.R."/>
            <person name="Kodira C.D."/>
            <person name="Leon-Narvaez H."/>
            <person name="Longo L.V.G."/>
            <person name="Ma L.-J."/>
            <person name="Malavazi I."/>
            <person name="Matsuo A.L."/>
            <person name="Morais F.V."/>
            <person name="Pereira M."/>
            <person name="Rodriguez-Brito S."/>
            <person name="Sakthikumar S."/>
            <person name="Salem-Izacc S.M."/>
            <person name="Sykes S.M."/>
            <person name="Teixeira M.M."/>
            <person name="Vallejo M.C."/>
            <person name="Walter M.E."/>
            <person name="Yandava C."/>
            <person name="Young S."/>
            <person name="Zeng Q."/>
            <person name="Zucker J."/>
            <person name="Felipe M.S."/>
            <person name="Goldman G.H."/>
            <person name="Haas B.J."/>
            <person name="McEwen J.G."/>
            <person name="Nino-Vega G."/>
            <person name="Puccia R."/>
            <person name="San-Blas G."/>
            <person name="Soares C.M."/>
            <person name="Birren B.W."/>
            <person name="Cuomo C.A."/>
        </authorList>
    </citation>
    <scope>NUCLEOTIDE SEQUENCE [LARGE SCALE GENOMIC DNA]</scope>
    <source>
        <strain>Pb03</strain>
    </source>
</reference>
<gene>
    <name type="primary">SHO1</name>
    <name type="ORF">PABG_03857</name>
</gene>
<keyword id="KW-1003">Cell membrane</keyword>
<keyword id="KW-0472">Membrane</keyword>
<keyword id="KW-0728">SH3 domain</keyword>
<keyword id="KW-0346">Stress response</keyword>
<keyword id="KW-0812">Transmembrane</keyword>
<keyword id="KW-1133">Transmembrane helix</keyword>
<protein>
    <recommendedName>
        <fullName>High osmolarity signaling protein SHO1</fullName>
    </recommendedName>
    <alternativeName>
        <fullName>Osmosensor SHO1</fullName>
    </alternativeName>
</protein>
<accession>C0S7Q7</accession>
<name>SHO1_PARBP</name>
<organism>
    <name type="scientific">Paracoccidioides brasiliensis (strain Pb03)</name>
    <dbReference type="NCBI Taxonomy" id="482561"/>
    <lineage>
        <taxon>Eukaryota</taxon>
        <taxon>Fungi</taxon>
        <taxon>Dikarya</taxon>
        <taxon>Ascomycota</taxon>
        <taxon>Pezizomycotina</taxon>
        <taxon>Eurotiomycetes</taxon>
        <taxon>Eurotiomycetidae</taxon>
        <taxon>Onygenales</taxon>
        <taxon>Ajellomycetaceae</taxon>
        <taxon>Paracoccidioides</taxon>
    </lineage>
</organism>
<dbReference type="EMBL" id="KN305535">
    <property type="protein sequence ID" value="EEH21641.1"/>
    <property type="molecule type" value="Genomic_DNA"/>
</dbReference>
<dbReference type="SMR" id="C0S7Q7"/>
<dbReference type="VEuPathDB" id="FungiDB:PABG_03857"/>
<dbReference type="HOGENOM" id="CLU_043316_1_0_1"/>
<dbReference type="OrthoDB" id="39936at33183"/>
<dbReference type="GO" id="GO:0005886">
    <property type="term" value="C:plasma membrane"/>
    <property type="evidence" value="ECO:0007669"/>
    <property type="project" value="UniProtKB-SubCell"/>
</dbReference>
<dbReference type="CDD" id="cd11855">
    <property type="entry name" value="SH3_Sho1p"/>
    <property type="match status" value="1"/>
</dbReference>
<dbReference type="FunFam" id="2.30.30.40:FF:000213">
    <property type="entry name" value="High osmolarity signaling protein SHO1"/>
    <property type="match status" value="1"/>
</dbReference>
<dbReference type="Gene3D" id="2.30.30.40">
    <property type="entry name" value="SH3 Domains"/>
    <property type="match status" value="1"/>
</dbReference>
<dbReference type="InterPro" id="IPR036028">
    <property type="entry name" value="SH3-like_dom_sf"/>
</dbReference>
<dbReference type="InterPro" id="IPR001452">
    <property type="entry name" value="SH3_domain"/>
</dbReference>
<dbReference type="InterPro" id="IPR035522">
    <property type="entry name" value="Sho1_SH3"/>
</dbReference>
<dbReference type="Pfam" id="PF00018">
    <property type="entry name" value="SH3_1"/>
    <property type="match status" value="1"/>
</dbReference>
<dbReference type="SMART" id="SM00326">
    <property type="entry name" value="SH3"/>
    <property type="match status" value="1"/>
</dbReference>
<dbReference type="SUPFAM" id="SSF50044">
    <property type="entry name" value="SH3-domain"/>
    <property type="match status" value="1"/>
</dbReference>
<dbReference type="PROSITE" id="PS50002">
    <property type="entry name" value="SH3"/>
    <property type="match status" value="1"/>
</dbReference>